<gene>
    <name evidence="1" type="primary">lipA</name>
    <name type="ordered locus">RPC_2572</name>
</gene>
<proteinExistence type="inferred from homology"/>
<protein>
    <recommendedName>
        <fullName evidence="1">Lipoyl synthase</fullName>
        <ecNumber evidence="1">2.8.1.8</ecNumber>
    </recommendedName>
    <alternativeName>
        <fullName evidence="1">Lip-syn</fullName>
        <shortName evidence="1">LS</shortName>
    </alternativeName>
    <alternativeName>
        <fullName evidence="1">Lipoate synthase</fullName>
    </alternativeName>
    <alternativeName>
        <fullName evidence="1">Lipoic acid synthase</fullName>
    </alternativeName>
    <alternativeName>
        <fullName evidence="1">Sulfur insertion protein LipA</fullName>
    </alternativeName>
</protein>
<reference key="1">
    <citation type="submission" date="2006-03" db="EMBL/GenBank/DDBJ databases">
        <title>Complete sequence of Rhodopseudomonas palustris BisB18.</title>
        <authorList>
            <consortium name="US DOE Joint Genome Institute"/>
            <person name="Copeland A."/>
            <person name="Lucas S."/>
            <person name="Lapidus A."/>
            <person name="Barry K."/>
            <person name="Detter J.C."/>
            <person name="Glavina del Rio T."/>
            <person name="Hammon N."/>
            <person name="Israni S."/>
            <person name="Dalin E."/>
            <person name="Tice H."/>
            <person name="Pitluck S."/>
            <person name="Chain P."/>
            <person name="Malfatti S."/>
            <person name="Shin M."/>
            <person name="Vergez L."/>
            <person name="Schmutz J."/>
            <person name="Larimer F."/>
            <person name="Land M."/>
            <person name="Hauser L."/>
            <person name="Pelletier D.A."/>
            <person name="Kyrpides N."/>
            <person name="Anderson I."/>
            <person name="Oda Y."/>
            <person name="Harwood C.S."/>
            <person name="Richardson P."/>
        </authorList>
    </citation>
    <scope>NUCLEOTIDE SEQUENCE [LARGE SCALE GENOMIC DNA]</scope>
    <source>
        <strain>BisB18</strain>
    </source>
</reference>
<name>LIPA_RHOPB</name>
<evidence type="ECO:0000255" key="1">
    <source>
        <dbReference type="HAMAP-Rule" id="MF_00206"/>
    </source>
</evidence>
<evidence type="ECO:0000255" key="2">
    <source>
        <dbReference type="PROSITE-ProRule" id="PRU01266"/>
    </source>
</evidence>
<accession>Q214R4</accession>
<comment type="function">
    <text evidence="1">Catalyzes the radical-mediated insertion of two sulfur atoms into the C-6 and C-8 positions of the octanoyl moiety bound to the lipoyl domains of lipoate-dependent enzymes, thereby converting the octanoylated domains into lipoylated derivatives.</text>
</comment>
<comment type="catalytic activity">
    <reaction evidence="1">
        <text>[[Fe-S] cluster scaffold protein carrying a second [4Fe-4S](2+) cluster] + N(6)-octanoyl-L-lysyl-[protein] + 2 oxidized [2Fe-2S]-[ferredoxin] + 2 S-adenosyl-L-methionine + 4 H(+) = [[Fe-S] cluster scaffold protein] + N(6)-[(R)-dihydrolipoyl]-L-lysyl-[protein] + 4 Fe(3+) + 2 hydrogen sulfide + 2 5'-deoxyadenosine + 2 L-methionine + 2 reduced [2Fe-2S]-[ferredoxin]</text>
        <dbReference type="Rhea" id="RHEA:16585"/>
        <dbReference type="Rhea" id="RHEA-COMP:9928"/>
        <dbReference type="Rhea" id="RHEA-COMP:10000"/>
        <dbReference type="Rhea" id="RHEA-COMP:10001"/>
        <dbReference type="Rhea" id="RHEA-COMP:10475"/>
        <dbReference type="Rhea" id="RHEA-COMP:14568"/>
        <dbReference type="Rhea" id="RHEA-COMP:14569"/>
        <dbReference type="ChEBI" id="CHEBI:15378"/>
        <dbReference type="ChEBI" id="CHEBI:17319"/>
        <dbReference type="ChEBI" id="CHEBI:29034"/>
        <dbReference type="ChEBI" id="CHEBI:29919"/>
        <dbReference type="ChEBI" id="CHEBI:33722"/>
        <dbReference type="ChEBI" id="CHEBI:33737"/>
        <dbReference type="ChEBI" id="CHEBI:33738"/>
        <dbReference type="ChEBI" id="CHEBI:57844"/>
        <dbReference type="ChEBI" id="CHEBI:59789"/>
        <dbReference type="ChEBI" id="CHEBI:78809"/>
        <dbReference type="ChEBI" id="CHEBI:83100"/>
        <dbReference type="EC" id="2.8.1.8"/>
    </reaction>
</comment>
<comment type="cofactor">
    <cofactor evidence="1">
        <name>[4Fe-4S] cluster</name>
        <dbReference type="ChEBI" id="CHEBI:49883"/>
    </cofactor>
    <text evidence="1">Binds 2 [4Fe-4S] clusters per subunit. One cluster is coordinated with 3 cysteines and an exchangeable S-adenosyl-L-methionine.</text>
</comment>
<comment type="pathway">
    <text evidence="1">Protein modification; protein lipoylation via endogenous pathway; protein N(6)-(lipoyl)lysine from octanoyl-[acyl-carrier-protein]: step 2/2.</text>
</comment>
<comment type="subcellular location">
    <subcellularLocation>
        <location evidence="1">Cytoplasm</location>
    </subcellularLocation>
</comment>
<comment type="similarity">
    <text evidence="1">Belongs to the radical SAM superfamily. Lipoyl synthase family.</text>
</comment>
<feature type="chain" id="PRO_1000012263" description="Lipoyl synthase">
    <location>
        <begin position="1"/>
        <end position="319"/>
    </location>
</feature>
<feature type="domain" description="Radical SAM core" evidence="2">
    <location>
        <begin position="73"/>
        <end position="289"/>
    </location>
</feature>
<feature type="binding site" evidence="1">
    <location>
        <position position="61"/>
    </location>
    <ligand>
        <name>[4Fe-4S] cluster</name>
        <dbReference type="ChEBI" id="CHEBI:49883"/>
        <label>1</label>
    </ligand>
</feature>
<feature type="binding site" evidence="1">
    <location>
        <position position="66"/>
    </location>
    <ligand>
        <name>[4Fe-4S] cluster</name>
        <dbReference type="ChEBI" id="CHEBI:49883"/>
        <label>1</label>
    </ligand>
</feature>
<feature type="binding site" evidence="1">
    <location>
        <position position="72"/>
    </location>
    <ligand>
        <name>[4Fe-4S] cluster</name>
        <dbReference type="ChEBI" id="CHEBI:49883"/>
        <label>1</label>
    </ligand>
</feature>
<feature type="binding site" evidence="1">
    <location>
        <position position="87"/>
    </location>
    <ligand>
        <name>[4Fe-4S] cluster</name>
        <dbReference type="ChEBI" id="CHEBI:49883"/>
        <label>2</label>
        <note>4Fe-4S-S-AdoMet</note>
    </ligand>
</feature>
<feature type="binding site" evidence="1">
    <location>
        <position position="91"/>
    </location>
    <ligand>
        <name>[4Fe-4S] cluster</name>
        <dbReference type="ChEBI" id="CHEBI:49883"/>
        <label>2</label>
        <note>4Fe-4S-S-AdoMet</note>
    </ligand>
</feature>
<feature type="binding site" evidence="1">
    <location>
        <position position="94"/>
    </location>
    <ligand>
        <name>[4Fe-4S] cluster</name>
        <dbReference type="ChEBI" id="CHEBI:49883"/>
        <label>2</label>
        <note>4Fe-4S-S-AdoMet</note>
    </ligand>
</feature>
<feature type="binding site" evidence="1">
    <location>
        <position position="300"/>
    </location>
    <ligand>
        <name>[4Fe-4S] cluster</name>
        <dbReference type="ChEBI" id="CHEBI:49883"/>
        <label>1</label>
    </ligand>
</feature>
<keyword id="KW-0004">4Fe-4S</keyword>
<keyword id="KW-0963">Cytoplasm</keyword>
<keyword id="KW-0408">Iron</keyword>
<keyword id="KW-0411">Iron-sulfur</keyword>
<keyword id="KW-0479">Metal-binding</keyword>
<keyword id="KW-0949">S-adenosyl-L-methionine</keyword>
<keyword id="KW-0808">Transferase</keyword>
<sequence>MVVVVDTVSATPIRPRHPEKAARPDSLSPKKPEWIRVRAPTSRGYADTRAIVKENGLVTVCEEAGCPNIGECWDKKHATFMIMGDTCTRACAFCNVKTGMPEALDQAEPEHVAEATFKLGLKHIVITSVDRDDLADGGAAHIAATIRAVRARCPSTTIEILTPDFLRKDGALETVVAAKPDVFNHNLETVPSRYLTVRPGARYFHSIRLLQRVKEIDPTMFTKSGIMVGLGEERHEVLQVMDDLRSADVDFLTIGQYLQPSLKHHAVMRFVTPEEFAGYESVAYSKGFLMVSSSPMTRSSHHAGDNFTKLQAARAALSR</sequence>
<organism>
    <name type="scientific">Rhodopseudomonas palustris (strain BisB18)</name>
    <dbReference type="NCBI Taxonomy" id="316056"/>
    <lineage>
        <taxon>Bacteria</taxon>
        <taxon>Pseudomonadati</taxon>
        <taxon>Pseudomonadota</taxon>
        <taxon>Alphaproteobacteria</taxon>
        <taxon>Hyphomicrobiales</taxon>
        <taxon>Nitrobacteraceae</taxon>
        <taxon>Rhodopseudomonas</taxon>
    </lineage>
</organism>
<dbReference type="EC" id="2.8.1.8" evidence="1"/>
<dbReference type="EMBL" id="CP000301">
    <property type="protein sequence ID" value="ABD88122.1"/>
    <property type="molecule type" value="Genomic_DNA"/>
</dbReference>
<dbReference type="SMR" id="Q214R4"/>
<dbReference type="STRING" id="316056.RPC_2572"/>
<dbReference type="KEGG" id="rpc:RPC_2572"/>
<dbReference type="eggNOG" id="COG0320">
    <property type="taxonomic scope" value="Bacteria"/>
</dbReference>
<dbReference type="HOGENOM" id="CLU_033144_2_1_5"/>
<dbReference type="OrthoDB" id="9787898at2"/>
<dbReference type="UniPathway" id="UPA00538">
    <property type="reaction ID" value="UER00593"/>
</dbReference>
<dbReference type="GO" id="GO:0005737">
    <property type="term" value="C:cytoplasm"/>
    <property type="evidence" value="ECO:0007669"/>
    <property type="project" value="UniProtKB-SubCell"/>
</dbReference>
<dbReference type="GO" id="GO:0051539">
    <property type="term" value="F:4 iron, 4 sulfur cluster binding"/>
    <property type="evidence" value="ECO:0007669"/>
    <property type="project" value="UniProtKB-UniRule"/>
</dbReference>
<dbReference type="GO" id="GO:0016992">
    <property type="term" value="F:lipoate synthase activity"/>
    <property type="evidence" value="ECO:0007669"/>
    <property type="project" value="UniProtKB-UniRule"/>
</dbReference>
<dbReference type="GO" id="GO:0046872">
    <property type="term" value="F:metal ion binding"/>
    <property type="evidence" value="ECO:0007669"/>
    <property type="project" value="UniProtKB-KW"/>
</dbReference>
<dbReference type="CDD" id="cd01335">
    <property type="entry name" value="Radical_SAM"/>
    <property type="match status" value="1"/>
</dbReference>
<dbReference type="FunFam" id="3.20.20.70:FF:000040">
    <property type="entry name" value="Lipoyl synthase"/>
    <property type="match status" value="1"/>
</dbReference>
<dbReference type="Gene3D" id="3.20.20.70">
    <property type="entry name" value="Aldolase class I"/>
    <property type="match status" value="1"/>
</dbReference>
<dbReference type="HAMAP" id="MF_00206">
    <property type="entry name" value="Lipoyl_synth"/>
    <property type="match status" value="1"/>
</dbReference>
<dbReference type="InterPro" id="IPR013785">
    <property type="entry name" value="Aldolase_TIM"/>
</dbReference>
<dbReference type="InterPro" id="IPR006638">
    <property type="entry name" value="Elp3/MiaA/NifB-like_rSAM"/>
</dbReference>
<dbReference type="InterPro" id="IPR003698">
    <property type="entry name" value="Lipoyl_synth"/>
</dbReference>
<dbReference type="InterPro" id="IPR007197">
    <property type="entry name" value="rSAM"/>
</dbReference>
<dbReference type="NCBIfam" id="TIGR00510">
    <property type="entry name" value="lipA"/>
    <property type="match status" value="1"/>
</dbReference>
<dbReference type="NCBIfam" id="NF004019">
    <property type="entry name" value="PRK05481.1"/>
    <property type="match status" value="1"/>
</dbReference>
<dbReference type="NCBIfam" id="NF009544">
    <property type="entry name" value="PRK12928.1"/>
    <property type="match status" value="1"/>
</dbReference>
<dbReference type="PANTHER" id="PTHR10949">
    <property type="entry name" value="LIPOYL SYNTHASE"/>
    <property type="match status" value="1"/>
</dbReference>
<dbReference type="PANTHER" id="PTHR10949:SF0">
    <property type="entry name" value="LIPOYL SYNTHASE, MITOCHONDRIAL"/>
    <property type="match status" value="1"/>
</dbReference>
<dbReference type="Pfam" id="PF04055">
    <property type="entry name" value="Radical_SAM"/>
    <property type="match status" value="1"/>
</dbReference>
<dbReference type="PIRSF" id="PIRSF005963">
    <property type="entry name" value="Lipoyl_synth"/>
    <property type="match status" value="1"/>
</dbReference>
<dbReference type="SFLD" id="SFLDF00271">
    <property type="entry name" value="lipoyl_synthase"/>
    <property type="match status" value="1"/>
</dbReference>
<dbReference type="SFLD" id="SFLDS00029">
    <property type="entry name" value="Radical_SAM"/>
    <property type="match status" value="1"/>
</dbReference>
<dbReference type="SMART" id="SM00729">
    <property type="entry name" value="Elp3"/>
    <property type="match status" value="1"/>
</dbReference>
<dbReference type="SUPFAM" id="SSF102114">
    <property type="entry name" value="Radical SAM enzymes"/>
    <property type="match status" value="1"/>
</dbReference>
<dbReference type="PROSITE" id="PS51918">
    <property type="entry name" value="RADICAL_SAM"/>
    <property type="match status" value="1"/>
</dbReference>